<comment type="function">
    <text evidence="1">This protein binds to the 23S rRNA, and is important in its secondary structure. It is located near the subunit interface in the base of the L7/L12 stalk, and near the tRNA binding site of the peptidyltransferase center.</text>
</comment>
<comment type="subunit">
    <text evidence="1">Part of the 50S ribosomal subunit.</text>
</comment>
<comment type="similarity">
    <text evidence="1">Belongs to the universal ribosomal protein uL6 family.</text>
</comment>
<sequence length="180" mass="19531">MSRVGKLPVAIPNGVTVTVTPDNVVTVKGSKGELVKAMSNKINIAVEDNSVVVTRDNDHKDVRALHGLTRALINNMVTGVNEGYVKTLELIGVGYRAQLQGKKLVLSLGFSHPVEMEAVSGVEFEVEGGTKVKVKGIDKELVGAVAADIRKWRKPEPYKGKGIKYENEVIRRKEGKTGKK</sequence>
<feature type="chain" id="PRO_1000143966" description="Large ribosomal subunit protein uL6">
    <location>
        <begin position="1"/>
        <end position="180"/>
    </location>
</feature>
<proteinExistence type="inferred from homology"/>
<evidence type="ECO:0000255" key="1">
    <source>
        <dbReference type="HAMAP-Rule" id="MF_01365"/>
    </source>
</evidence>
<evidence type="ECO:0000305" key="2"/>
<gene>
    <name evidence="1" type="primary">rplF</name>
    <name type="ordered locus">CLK_2909</name>
</gene>
<keyword id="KW-0687">Ribonucleoprotein</keyword>
<keyword id="KW-0689">Ribosomal protein</keyword>
<keyword id="KW-0694">RNA-binding</keyword>
<keyword id="KW-0699">rRNA-binding</keyword>
<accession>B1KSL0</accession>
<name>RL6_CLOBM</name>
<protein>
    <recommendedName>
        <fullName evidence="1">Large ribosomal subunit protein uL6</fullName>
    </recommendedName>
    <alternativeName>
        <fullName evidence="2">50S ribosomal protein L6</fullName>
    </alternativeName>
</protein>
<dbReference type="EMBL" id="CP000962">
    <property type="protein sequence ID" value="ACA55940.1"/>
    <property type="molecule type" value="Genomic_DNA"/>
</dbReference>
<dbReference type="RefSeq" id="WP_012343859.1">
    <property type="nucleotide sequence ID" value="NC_010520.1"/>
</dbReference>
<dbReference type="SMR" id="B1KSL0"/>
<dbReference type="KEGG" id="cbl:CLK_2909"/>
<dbReference type="HOGENOM" id="CLU_065464_1_2_9"/>
<dbReference type="GO" id="GO:0022625">
    <property type="term" value="C:cytosolic large ribosomal subunit"/>
    <property type="evidence" value="ECO:0007669"/>
    <property type="project" value="TreeGrafter"/>
</dbReference>
<dbReference type="GO" id="GO:0019843">
    <property type="term" value="F:rRNA binding"/>
    <property type="evidence" value="ECO:0007669"/>
    <property type="project" value="UniProtKB-UniRule"/>
</dbReference>
<dbReference type="GO" id="GO:0003735">
    <property type="term" value="F:structural constituent of ribosome"/>
    <property type="evidence" value="ECO:0007669"/>
    <property type="project" value="InterPro"/>
</dbReference>
<dbReference type="GO" id="GO:0002181">
    <property type="term" value="P:cytoplasmic translation"/>
    <property type="evidence" value="ECO:0007669"/>
    <property type="project" value="TreeGrafter"/>
</dbReference>
<dbReference type="FunFam" id="3.90.930.12:FF:000001">
    <property type="entry name" value="50S ribosomal protein L6"/>
    <property type="match status" value="1"/>
</dbReference>
<dbReference type="FunFam" id="3.90.930.12:FF:000002">
    <property type="entry name" value="50S ribosomal protein L6"/>
    <property type="match status" value="1"/>
</dbReference>
<dbReference type="Gene3D" id="3.90.930.12">
    <property type="entry name" value="Ribosomal protein L6, alpha-beta domain"/>
    <property type="match status" value="2"/>
</dbReference>
<dbReference type="HAMAP" id="MF_01365_B">
    <property type="entry name" value="Ribosomal_uL6_B"/>
    <property type="match status" value="1"/>
</dbReference>
<dbReference type="InterPro" id="IPR000702">
    <property type="entry name" value="Ribosomal_uL6-like"/>
</dbReference>
<dbReference type="InterPro" id="IPR036789">
    <property type="entry name" value="Ribosomal_uL6-like_a/b-dom_sf"/>
</dbReference>
<dbReference type="InterPro" id="IPR020040">
    <property type="entry name" value="Ribosomal_uL6_a/b-dom"/>
</dbReference>
<dbReference type="InterPro" id="IPR019906">
    <property type="entry name" value="Ribosomal_uL6_bac-type"/>
</dbReference>
<dbReference type="InterPro" id="IPR002358">
    <property type="entry name" value="Ribosomal_uL6_CS"/>
</dbReference>
<dbReference type="NCBIfam" id="TIGR03654">
    <property type="entry name" value="L6_bact"/>
    <property type="match status" value="1"/>
</dbReference>
<dbReference type="PANTHER" id="PTHR11655">
    <property type="entry name" value="60S/50S RIBOSOMAL PROTEIN L6/L9"/>
    <property type="match status" value="1"/>
</dbReference>
<dbReference type="PANTHER" id="PTHR11655:SF14">
    <property type="entry name" value="LARGE RIBOSOMAL SUBUNIT PROTEIN UL6M"/>
    <property type="match status" value="1"/>
</dbReference>
<dbReference type="Pfam" id="PF00347">
    <property type="entry name" value="Ribosomal_L6"/>
    <property type="match status" value="2"/>
</dbReference>
<dbReference type="PIRSF" id="PIRSF002162">
    <property type="entry name" value="Ribosomal_L6"/>
    <property type="match status" value="1"/>
</dbReference>
<dbReference type="PRINTS" id="PR00059">
    <property type="entry name" value="RIBOSOMALL6"/>
</dbReference>
<dbReference type="SUPFAM" id="SSF56053">
    <property type="entry name" value="Ribosomal protein L6"/>
    <property type="match status" value="2"/>
</dbReference>
<dbReference type="PROSITE" id="PS00525">
    <property type="entry name" value="RIBOSOMAL_L6_1"/>
    <property type="match status" value="1"/>
</dbReference>
<reference key="1">
    <citation type="journal article" date="2007" name="PLoS ONE">
        <title>Analysis of the neurotoxin complex genes in Clostridium botulinum A1-A4 and B1 strains: BoNT/A3, /Ba4 and /B1 clusters are located within plasmids.</title>
        <authorList>
            <person name="Smith T.J."/>
            <person name="Hill K.K."/>
            <person name="Foley B.T."/>
            <person name="Detter J.C."/>
            <person name="Munk A.C."/>
            <person name="Bruce D.C."/>
            <person name="Doggett N.A."/>
            <person name="Smith L.A."/>
            <person name="Marks J.D."/>
            <person name="Xie G."/>
            <person name="Brettin T.S."/>
        </authorList>
    </citation>
    <scope>NUCLEOTIDE SEQUENCE [LARGE SCALE GENOMIC DNA]</scope>
    <source>
        <strain>Loch Maree / Type A3</strain>
    </source>
</reference>
<organism>
    <name type="scientific">Clostridium botulinum (strain Loch Maree / Type A3)</name>
    <dbReference type="NCBI Taxonomy" id="498214"/>
    <lineage>
        <taxon>Bacteria</taxon>
        <taxon>Bacillati</taxon>
        <taxon>Bacillota</taxon>
        <taxon>Clostridia</taxon>
        <taxon>Eubacteriales</taxon>
        <taxon>Clostridiaceae</taxon>
        <taxon>Clostridium</taxon>
    </lineage>
</organism>